<sequence length="103" mass="11673">MERIRLKLKAYDHRVLDRTVAAIVEAVKRTGADIRGPIPMPTKIKRYTVLKSPHINKDSREQFEIRIHARMLDIVAATPDTVDSLTKLDLAPEVSVEVRAMGK</sequence>
<protein>
    <recommendedName>
        <fullName evidence="1">Small ribosomal subunit protein uS10</fullName>
    </recommendedName>
    <alternativeName>
        <fullName evidence="2">30S ribosomal protein S10</fullName>
    </alternativeName>
</protein>
<comment type="function">
    <text evidence="1">Involved in the binding of tRNA to the ribosomes.</text>
</comment>
<comment type="subunit">
    <text evidence="1">Part of the 30S ribosomal subunit.</text>
</comment>
<comment type="similarity">
    <text evidence="1">Belongs to the universal ribosomal protein uS10 family.</text>
</comment>
<name>RS10_CAMJR</name>
<reference key="1">
    <citation type="journal article" date="2005" name="PLoS Biol.">
        <title>Major structural differences and novel potential virulence mechanisms from the genomes of multiple Campylobacter species.</title>
        <authorList>
            <person name="Fouts D.E."/>
            <person name="Mongodin E.F."/>
            <person name="Mandrell R.E."/>
            <person name="Miller W.G."/>
            <person name="Rasko D.A."/>
            <person name="Ravel J."/>
            <person name="Brinkac L.M."/>
            <person name="DeBoy R.T."/>
            <person name="Parker C.T."/>
            <person name="Daugherty S.C."/>
            <person name="Dodson R.J."/>
            <person name="Durkin A.S."/>
            <person name="Madupu R."/>
            <person name="Sullivan S.A."/>
            <person name="Shetty J.U."/>
            <person name="Ayodeji M.A."/>
            <person name="Shvartsbeyn A."/>
            <person name="Schatz M.C."/>
            <person name="Badger J.H."/>
            <person name="Fraser C.M."/>
            <person name="Nelson K.E."/>
        </authorList>
    </citation>
    <scope>NUCLEOTIDE SEQUENCE [LARGE SCALE GENOMIC DNA]</scope>
    <source>
        <strain>RM1221</strain>
    </source>
</reference>
<dbReference type="EMBL" id="CP000025">
    <property type="protein sequence ID" value="AAW34476.1"/>
    <property type="molecule type" value="Genomic_DNA"/>
</dbReference>
<dbReference type="RefSeq" id="WP_002779353.1">
    <property type="nucleotide sequence ID" value="NC_003912.7"/>
</dbReference>
<dbReference type="SMR" id="Q5HS89"/>
<dbReference type="GeneID" id="98395699"/>
<dbReference type="KEGG" id="cjr:CJE1876"/>
<dbReference type="HOGENOM" id="CLU_122625_1_2_7"/>
<dbReference type="GO" id="GO:1990904">
    <property type="term" value="C:ribonucleoprotein complex"/>
    <property type="evidence" value="ECO:0007669"/>
    <property type="project" value="UniProtKB-KW"/>
</dbReference>
<dbReference type="GO" id="GO:0005840">
    <property type="term" value="C:ribosome"/>
    <property type="evidence" value="ECO:0007669"/>
    <property type="project" value="UniProtKB-KW"/>
</dbReference>
<dbReference type="GO" id="GO:0003735">
    <property type="term" value="F:structural constituent of ribosome"/>
    <property type="evidence" value="ECO:0007669"/>
    <property type="project" value="InterPro"/>
</dbReference>
<dbReference type="GO" id="GO:0000049">
    <property type="term" value="F:tRNA binding"/>
    <property type="evidence" value="ECO:0007669"/>
    <property type="project" value="UniProtKB-UniRule"/>
</dbReference>
<dbReference type="GO" id="GO:0006412">
    <property type="term" value="P:translation"/>
    <property type="evidence" value="ECO:0007669"/>
    <property type="project" value="UniProtKB-UniRule"/>
</dbReference>
<dbReference type="FunFam" id="3.30.70.600:FF:000003">
    <property type="entry name" value="30S ribosomal protein S10"/>
    <property type="match status" value="1"/>
</dbReference>
<dbReference type="Gene3D" id="3.30.70.600">
    <property type="entry name" value="Ribosomal protein S10 domain"/>
    <property type="match status" value="1"/>
</dbReference>
<dbReference type="HAMAP" id="MF_00508">
    <property type="entry name" value="Ribosomal_uS10"/>
    <property type="match status" value="1"/>
</dbReference>
<dbReference type="InterPro" id="IPR001848">
    <property type="entry name" value="Ribosomal_uS10"/>
</dbReference>
<dbReference type="InterPro" id="IPR018268">
    <property type="entry name" value="Ribosomal_uS10_CS"/>
</dbReference>
<dbReference type="InterPro" id="IPR027486">
    <property type="entry name" value="Ribosomal_uS10_dom"/>
</dbReference>
<dbReference type="InterPro" id="IPR036838">
    <property type="entry name" value="Ribosomal_uS10_dom_sf"/>
</dbReference>
<dbReference type="NCBIfam" id="NF001861">
    <property type="entry name" value="PRK00596.1"/>
    <property type="match status" value="1"/>
</dbReference>
<dbReference type="NCBIfam" id="TIGR01049">
    <property type="entry name" value="rpsJ_bact"/>
    <property type="match status" value="1"/>
</dbReference>
<dbReference type="PANTHER" id="PTHR11700">
    <property type="entry name" value="30S RIBOSOMAL PROTEIN S10 FAMILY MEMBER"/>
    <property type="match status" value="1"/>
</dbReference>
<dbReference type="Pfam" id="PF00338">
    <property type="entry name" value="Ribosomal_S10"/>
    <property type="match status" value="1"/>
</dbReference>
<dbReference type="PRINTS" id="PR00971">
    <property type="entry name" value="RIBOSOMALS10"/>
</dbReference>
<dbReference type="SMART" id="SM01403">
    <property type="entry name" value="Ribosomal_S10"/>
    <property type="match status" value="1"/>
</dbReference>
<dbReference type="SUPFAM" id="SSF54999">
    <property type="entry name" value="Ribosomal protein S10"/>
    <property type="match status" value="1"/>
</dbReference>
<dbReference type="PROSITE" id="PS00361">
    <property type="entry name" value="RIBOSOMAL_S10"/>
    <property type="match status" value="1"/>
</dbReference>
<evidence type="ECO:0000255" key="1">
    <source>
        <dbReference type="HAMAP-Rule" id="MF_00508"/>
    </source>
</evidence>
<evidence type="ECO:0000305" key="2"/>
<keyword id="KW-0687">Ribonucleoprotein</keyword>
<keyword id="KW-0689">Ribosomal protein</keyword>
<gene>
    <name evidence="1" type="primary">rpsJ</name>
    <name type="ordered locus">CJE1876</name>
</gene>
<accession>Q5HS89</accession>
<feature type="chain" id="PRO_0000237028" description="Small ribosomal subunit protein uS10">
    <location>
        <begin position="1"/>
        <end position="103"/>
    </location>
</feature>
<proteinExistence type="inferred from homology"/>
<organism>
    <name type="scientific">Campylobacter jejuni (strain RM1221)</name>
    <dbReference type="NCBI Taxonomy" id="195099"/>
    <lineage>
        <taxon>Bacteria</taxon>
        <taxon>Pseudomonadati</taxon>
        <taxon>Campylobacterota</taxon>
        <taxon>Epsilonproteobacteria</taxon>
        <taxon>Campylobacterales</taxon>
        <taxon>Campylobacteraceae</taxon>
        <taxon>Campylobacter</taxon>
    </lineage>
</organism>